<dbReference type="EC" id="5.3.1.16" evidence="1"/>
<dbReference type="EMBL" id="CP000155">
    <property type="protein sequence ID" value="ABC28211.1"/>
    <property type="molecule type" value="Genomic_DNA"/>
</dbReference>
<dbReference type="RefSeq" id="WP_011395284.1">
    <property type="nucleotide sequence ID" value="NC_007645.1"/>
</dbReference>
<dbReference type="SMR" id="Q2SMB3"/>
<dbReference type="STRING" id="349521.HCH_01346"/>
<dbReference type="KEGG" id="hch:HCH_01346"/>
<dbReference type="eggNOG" id="COG0106">
    <property type="taxonomic scope" value="Bacteria"/>
</dbReference>
<dbReference type="HOGENOM" id="CLU_048577_1_1_6"/>
<dbReference type="OrthoDB" id="9807749at2"/>
<dbReference type="UniPathway" id="UPA00031">
    <property type="reaction ID" value="UER00009"/>
</dbReference>
<dbReference type="Proteomes" id="UP000000238">
    <property type="component" value="Chromosome"/>
</dbReference>
<dbReference type="GO" id="GO:0005737">
    <property type="term" value="C:cytoplasm"/>
    <property type="evidence" value="ECO:0007669"/>
    <property type="project" value="UniProtKB-SubCell"/>
</dbReference>
<dbReference type="GO" id="GO:0003949">
    <property type="term" value="F:1-(5-phosphoribosyl)-5-[(5-phosphoribosylamino)methylideneamino]imidazole-4-carboxamide isomerase activity"/>
    <property type="evidence" value="ECO:0007669"/>
    <property type="project" value="UniProtKB-UniRule"/>
</dbReference>
<dbReference type="GO" id="GO:0000105">
    <property type="term" value="P:L-histidine biosynthetic process"/>
    <property type="evidence" value="ECO:0007669"/>
    <property type="project" value="UniProtKB-UniRule"/>
</dbReference>
<dbReference type="GO" id="GO:0000162">
    <property type="term" value="P:L-tryptophan biosynthetic process"/>
    <property type="evidence" value="ECO:0007669"/>
    <property type="project" value="TreeGrafter"/>
</dbReference>
<dbReference type="CDD" id="cd04732">
    <property type="entry name" value="HisA"/>
    <property type="match status" value="1"/>
</dbReference>
<dbReference type="FunFam" id="3.20.20.70:FF:000009">
    <property type="entry name" value="1-(5-phosphoribosyl)-5-[(5-phosphoribosylamino)methylideneamino] imidazole-4-carboxamide isomerase"/>
    <property type="match status" value="1"/>
</dbReference>
<dbReference type="Gene3D" id="3.20.20.70">
    <property type="entry name" value="Aldolase class I"/>
    <property type="match status" value="1"/>
</dbReference>
<dbReference type="HAMAP" id="MF_01014">
    <property type="entry name" value="HisA"/>
    <property type="match status" value="1"/>
</dbReference>
<dbReference type="InterPro" id="IPR013785">
    <property type="entry name" value="Aldolase_TIM"/>
</dbReference>
<dbReference type="InterPro" id="IPR006062">
    <property type="entry name" value="His_biosynth"/>
</dbReference>
<dbReference type="InterPro" id="IPR006063">
    <property type="entry name" value="HisA_bact_arch"/>
</dbReference>
<dbReference type="InterPro" id="IPR044524">
    <property type="entry name" value="Isoase_HisA-like"/>
</dbReference>
<dbReference type="InterPro" id="IPR023016">
    <property type="entry name" value="Isoase_HisA-like_bact"/>
</dbReference>
<dbReference type="InterPro" id="IPR011060">
    <property type="entry name" value="RibuloseP-bd_barrel"/>
</dbReference>
<dbReference type="NCBIfam" id="TIGR00007">
    <property type="entry name" value="1-(5-phosphoribosyl)-5-[(5-phosphoribosylamino)methylideneamino]imidazole-4-carboxamide isomerase"/>
    <property type="match status" value="1"/>
</dbReference>
<dbReference type="NCBIfam" id="NF010112">
    <property type="entry name" value="PRK13585.1"/>
    <property type="match status" value="1"/>
</dbReference>
<dbReference type="PANTHER" id="PTHR43090">
    <property type="entry name" value="1-(5-PHOSPHORIBOSYL)-5-[(5-PHOSPHORIBOSYLAMINO)METHYLIDENEAMINO] IMIDAZOLE-4-CARBOXAMIDE ISOMERASE"/>
    <property type="match status" value="1"/>
</dbReference>
<dbReference type="PANTHER" id="PTHR43090:SF2">
    <property type="entry name" value="1-(5-PHOSPHORIBOSYL)-5-[(5-PHOSPHORIBOSYLAMINO)METHYLIDENEAMINO] IMIDAZOLE-4-CARBOXAMIDE ISOMERASE"/>
    <property type="match status" value="1"/>
</dbReference>
<dbReference type="Pfam" id="PF00977">
    <property type="entry name" value="His_biosynth"/>
    <property type="match status" value="1"/>
</dbReference>
<dbReference type="SUPFAM" id="SSF51366">
    <property type="entry name" value="Ribulose-phoshate binding barrel"/>
    <property type="match status" value="1"/>
</dbReference>
<organism>
    <name type="scientific">Hahella chejuensis (strain KCTC 2396)</name>
    <dbReference type="NCBI Taxonomy" id="349521"/>
    <lineage>
        <taxon>Bacteria</taxon>
        <taxon>Pseudomonadati</taxon>
        <taxon>Pseudomonadota</taxon>
        <taxon>Gammaproteobacteria</taxon>
        <taxon>Oceanospirillales</taxon>
        <taxon>Hahellaceae</taxon>
        <taxon>Hahella</taxon>
    </lineage>
</organism>
<proteinExistence type="inferred from homology"/>
<evidence type="ECO:0000255" key="1">
    <source>
        <dbReference type="HAMAP-Rule" id="MF_01014"/>
    </source>
</evidence>
<gene>
    <name evidence="1" type="primary">hisA</name>
    <name type="ordered locus">HCH_01346</name>
</gene>
<feature type="chain" id="PRO_0000290479" description="1-(5-phosphoribosyl)-5-[(5-phosphoribosylamino)methylideneamino] imidazole-4-carboxamide isomerase">
    <location>
        <begin position="1"/>
        <end position="244"/>
    </location>
</feature>
<feature type="active site" description="Proton acceptor" evidence="1">
    <location>
        <position position="8"/>
    </location>
</feature>
<feature type="active site" description="Proton donor" evidence="1">
    <location>
        <position position="130"/>
    </location>
</feature>
<name>HIS4_HAHCH</name>
<keyword id="KW-0028">Amino-acid biosynthesis</keyword>
<keyword id="KW-0963">Cytoplasm</keyword>
<keyword id="KW-0368">Histidine biosynthesis</keyword>
<keyword id="KW-0413">Isomerase</keyword>
<keyword id="KW-1185">Reference proteome</keyword>
<comment type="catalytic activity">
    <reaction evidence="1">
        <text>1-(5-phospho-beta-D-ribosyl)-5-[(5-phospho-beta-D-ribosylamino)methylideneamino]imidazole-4-carboxamide = 5-[(5-phospho-1-deoxy-D-ribulos-1-ylimino)methylamino]-1-(5-phospho-beta-D-ribosyl)imidazole-4-carboxamide</text>
        <dbReference type="Rhea" id="RHEA:15469"/>
        <dbReference type="ChEBI" id="CHEBI:58435"/>
        <dbReference type="ChEBI" id="CHEBI:58525"/>
        <dbReference type="EC" id="5.3.1.16"/>
    </reaction>
</comment>
<comment type="pathway">
    <text evidence="1">Amino-acid biosynthesis; L-histidine biosynthesis; L-histidine from 5-phospho-alpha-D-ribose 1-diphosphate: step 4/9.</text>
</comment>
<comment type="subcellular location">
    <subcellularLocation>
        <location evidence="1">Cytoplasm</location>
    </subcellularLocation>
</comment>
<comment type="similarity">
    <text evidence="1">Belongs to the HisA/HisF family.</text>
</comment>
<reference key="1">
    <citation type="journal article" date="2005" name="Nucleic Acids Res.">
        <title>Genomic blueprint of Hahella chejuensis, a marine microbe producing an algicidal agent.</title>
        <authorList>
            <person name="Jeong H."/>
            <person name="Yim J.H."/>
            <person name="Lee C."/>
            <person name="Choi S.-H."/>
            <person name="Park Y.K."/>
            <person name="Yoon S.H."/>
            <person name="Hur C.-G."/>
            <person name="Kang H.-Y."/>
            <person name="Kim D."/>
            <person name="Lee H.H."/>
            <person name="Park K.H."/>
            <person name="Park S.-H."/>
            <person name="Park H.-S."/>
            <person name="Lee H.K."/>
            <person name="Oh T.K."/>
            <person name="Kim J.F."/>
        </authorList>
    </citation>
    <scope>NUCLEOTIDE SEQUENCE [LARGE SCALE GENOMIC DNA]</scope>
    <source>
        <strain>KCTC 2396</strain>
    </source>
</reference>
<sequence>MLIIPAIDLKDGKCVRLKQGRMDDSTVFSDDPVSMAAQWVDAGARRLHLVDLNGAFAGKPVNGEIVSAIAKAYPDLPIQIGGGIRELDIIEQYLDAGVKYVIIGTKAVKEPAFVEEACRAFPGAVIVGIDAKDGMVATEGWAEVSSVSAVDLAKQFRDAGVSSIVYTDIARDGMMQGVNVEATAALARESGLPVIASGGVTNMDDIRRLATVADSGVIGAITGRAIYEGALDLREAQTYCDSIA</sequence>
<protein>
    <recommendedName>
        <fullName evidence="1">1-(5-phosphoribosyl)-5-[(5-phosphoribosylamino)methylideneamino] imidazole-4-carboxamide isomerase</fullName>
        <ecNumber evidence="1">5.3.1.16</ecNumber>
    </recommendedName>
    <alternativeName>
        <fullName evidence="1">Phosphoribosylformimino-5-aminoimidazole carboxamide ribotide isomerase</fullName>
    </alternativeName>
</protein>
<accession>Q2SMB3</accession>